<dbReference type="EC" id="4.2.1.33" evidence="1"/>
<dbReference type="EMBL" id="AE016827">
    <property type="protein sequence ID" value="AAU37202.1"/>
    <property type="status" value="ALT_INIT"/>
    <property type="molecule type" value="Genomic_DNA"/>
</dbReference>
<dbReference type="RefSeq" id="WP_011199774.1">
    <property type="nucleotide sequence ID" value="NC_006300.1"/>
</dbReference>
<dbReference type="SMR" id="Q65V08"/>
<dbReference type="STRING" id="221988.MS0595"/>
<dbReference type="KEGG" id="msu:MS0595"/>
<dbReference type="eggNOG" id="COG0066">
    <property type="taxonomic scope" value="Bacteria"/>
</dbReference>
<dbReference type="HOGENOM" id="CLU_081378_0_3_6"/>
<dbReference type="OrthoDB" id="9777465at2"/>
<dbReference type="UniPathway" id="UPA00048">
    <property type="reaction ID" value="UER00071"/>
</dbReference>
<dbReference type="Proteomes" id="UP000000607">
    <property type="component" value="Chromosome"/>
</dbReference>
<dbReference type="GO" id="GO:0009316">
    <property type="term" value="C:3-isopropylmalate dehydratase complex"/>
    <property type="evidence" value="ECO:0007669"/>
    <property type="project" value="InterPro"/>
</dbReference>
<dbReference type="GO" id="GO:0003861">
    <property type="term" value="F:3-isopropylmalate dehydratase activity"/>
    <property type="evidence" value="ECO:0007669"/>
    <property type="project" value="UniProtKB-UniRule"/>
</dbReference>
<dbReference type="GO" id="GO:0009098">
    <property type="term" value="P:L-leucine biosynthetic process"/>
    <property type="evidence" value="ECO:0007669"/>
    <property type="project" value="UniProtKB-UniRule"/>
</dbReference>
<dbReference type="CDD" id="cd01577">
    <property type="entry name" value="IPMI_Swivel"/>
    <property type="match status" value="1"/>
</dbReference>
<dbReference type="FunFam" id="3.20.19.10:FF:000003">
    <property type="entry name" value="3-isopropylmalate dehydratase small subunit"/>
    <property type="match status" value="1"/>
</dbReference>
<dbReference type="Gene3D" id="3.20.19.10">
    <property type="entry name" value="Aconitase, domain 4"/>
    <property type="match status" value="1"/>
</dbReference>
<dbReference type="HAMAP" id="MF_01031">
    <property type="entry name" value="LeuD_type1"/>
    <property type="match status" value="1"/>
</dbReference>
<dbReference type="InterPro" id="IPR004431">
    <property type="entry name" value="3-IsopropMal_deHydase_ssu"/>
</dbReference>
<dbReference type="InterPro" id="IPR015928">
    <property type="entry name" value="Aconitase/3IPM_dehydase_swvl"/>
</dbReference>
<dbReference type="InterPro" id="IPR000573">
    <property type="entry name" value="AconitaseA/IPMdHydase_ssu_swvl"/>
</dbReference>
<dbReference type="InterPro" id="IPR033940">
    <property type="entry name" value="IPMI_Swivel"/>
</dbReference>
<dbReference type="InterPro" id="IPR050075">
    <property type="entry name" value="LeuD"/>
</dbReference>
<dbReference type="NCBIfam" id="TIGR00171">
    <property type="entry name" value="leuD"/>
    <property type="match status" value="1"/>
</dbReference>
<dbReference type="NCBIfam" id="NF002458">
    <property type="entry name" value="PRK01641.1"/>
    <property type="match status" value="1"/>
</dbReference>
<dbReference type="PANTHER" id="PTHR43345:SF5">
    <property type="entry name" value="3-ISOPROPYLMALATE DEHYDRATASE SMALL SUBUNIT"/>
    <property type="match status" value="1"/>
</dbReference>
<dbReference type="PANTHER" id="PTHR43345">
    <property type="entry name" value="3-ISOPROPYLMALATE DEHYDRATASE SMALL SUBUNIT 2-RELATED-RELATED"/>
    <property type="match status" value="1"/>
</dbReference>
<dbReference type="Pfam" id="PF00694">
    <property type="entry name" value="Aconitase_C"/>
    <property type="match status" value="1"/>
</dbReference>
<dbReference type="SUPFAM" id="SSF52016">
    <property type="entry name" value="LeuD/IlvD-like"/>
    <property type="match status" value="1"/>
</dbReference>
<comment type="function">
    <text evidence="1">Catalyzes the isomerization between 2-isopropylmalate and 3-isopropylmalate, via the formation of 2-isopropylmaleate.</text>
</comment>
<comment type="catalytic activity">
    <reaction evidence="1">
        <text>(2R,3S)-3-isopropylmalate = (2S)-2-isopropylmalate</text>
        <dbReference type="Rhea" id="RHEA:32287"/>
        <dbReference type="ChEBI" id="CHEBI:1178"/>
        <dbReference type="ChEBI" id="CHEBI:35121"/>
        <dbReference type="EC" id="4.2.1.33"/>
    </reaction>
</comment>
<comment type="pathway">
    <text evidence="1">Amino-acid biosynthesis; L-leucine biosynthesis; L-leucine from 3-methyl-2-oxobutanoate: step 2/4.</text>
</comment>
<comment type="subunit">
    <text evidence="1">Heterodimer of LeuC and LeuD.</text>
</comment>
<comment type="similarity">
    <text evidence="1">Belongs to the LeuD family. LeuD type 1 subfamily.</text>
</comment>
<comment type="sequence caution" evidence="2">
    <conflict type="erroneous initiation">
        <sequence resource="EMBL-CDS" id="AAU37202"/>
    </conflict>
</comment>
<keyword id="KW-0028">Amino-acid biosynthesis</keyword>
<keyword id="KW-0100">Branched-chain amino acid biosynthesis</keyword>
<keyword id="KW-0432">Leucine biosynthesis</keyword>
<keyword id="KW-0456">Lyase</keyword>
<gene>
    <name evidence="1" type="primary">leuD2</name>
    <name type="ordered locus">MS0595</name>
</gene>
<name>LEUD2_MANSM</name>
<protein>
    <recommendedName>
        <fullName evidence="1">3-isopropylmalate dehydratase small subunit 2</fullName>
        <ecNumber evidence="1">4.2.1.33</ecNumber>
    </recommendedName>
    <alternativeName>
        <fullName evidence="1">Alpha-IPM isomerase 2</fullName>
        <shortName evidence="1">IPMI 2</shortName>
    </alternativeName>
    <alternativeName>
        <fullName evidence="1">Isopropylmalate isomerase 2</fullName>
    </alternativeName>
</protein>
<reference key="1">
    <citation type="journal article" date="2004" name="Nat. Biotechnol.">
        <title>The genome sequence of the capnophilic rumen bacterium Mannheimia succiniciproducens.</title>
        <authorList>
            <person name="Hong S.H."/>
            <person name="Kim J.S."/>
            <person name="Lee S.Y."/>
            <person name="In Y.H."/>
            <person name="Choi S.S."/>
            <person name="Rih J.-K."/>
            <person name="Kim C.H."/>
            <person name="Jeong H."/>
            <person name="Hur C.G."/>
            <person name="Kim J.J."/>
        </authorList>
    </citation>
    <scope>NUCLEOTIDE SEQUENCE [LARGE SCALE GENOMIC DNA]</scope>
    <source>
        <strain>KCTC 0769BP / MBEL55E</strain>
    </source>
</reference>
<sequence length="200" mass="22667">MAGLKQHSGLVVPLDAANVDTDAIIPKQFLQAITRVGFGKHLFHEWRYLDAEETQPNPEFVLNFPQYQGASILLARKNLGCGSSREHAPWALADYGFKVMIAPSFADIFYNNSLNNHMLPIKLSEQEVEEIFQWVWANPGKKIDVDLEAKTVTVGEKVYHFDLDEFRRHCLLEGLDNIGLTLQHEDAIAAYESKIPAFLR</sequence>
<organism>
    <name type="scientific">Mannheimia succiniciproducens (strain KCTC 0769BP / MBEL55E)</name>
    <dbReference type="NCBI Taxonomy" id="221988"/>
    <lineage>
        <taxon>Bacteria</taxon>
        <taxon>Pseudomonadati</taxon>
        <taxon>Pseudomonadota</taxon>
        <taxon>Gammaproteobacteria</taxon>
        <taxon>Pasteurellales</taxon>
        <taxon>Pasteurellaceae</taxon>
        <taxon>Basfia</taxon>
    </lineage>
</organism>
<proteinExistence type="inferred from homology"/>
<accession>Q65V08</accession>
<evidence type="ECO:0000255" key="1">
    <source>
        <dbReference type="HAMAP-Rule" id="MF_01031"/>
    </source>
</evidence>
<evidence type="ECO:0000305" key="2"/>
<feature type="chain" id="PRO_0000141834" description="3-isopropylmalate dehydratase small subunit 2">
    <location>
        <begin position="1"/>
        <end position="200"/>
    </location>
</feature>